<feature type="chain" id="PRO_0000118940" description="Probable exocyst complex component sec8">
    <location>
        <begin position="1"/>
        <end position="1111"/>
    </location>
</feature>
<feature type="region of interest" description="Disordered" evidence="2">
    <location>
        <begin position="1"/>
        <end position="79"/>
    </location>
</feature>
<feature type="region of interest" description="Disordered" evidence="2">
    <location>
        <begin position="1023"/>
        <end position="1057"/>
    </location>
</feature>
<feature type="compositionally biased region" description="Low complexity" evidence="2">
    <location>
        <begin position="31"/>
        <end position="41"/>
    </location>
</feature>
<feature type="compositionally biased region" description="Polar residues" evidence="2">
    <location>
        <begin position="42"/>
        <end position="55"/>
    </location>
</feature>
<protein>
    <recommendedName>
        <fullName>Probable exocyst complex component sec8</fullName>
    </recommendedName>
</protein>
<reference key="1">
    <citation type="journal article" date="2003" name="Nucleic Acids Res.">
        <title>What's in the genome of a filamentous fungus? Analysis of the Neurospora genome sequence.</title>
        <authorList>
            <person name="Mannhaupt G."/>
            <person name="Montrone C."/>
            <person name="Haase D."/>
            <person name="Mewes H.-W."/>
            <person name="Aign V."/>
            <person name="Hoheisel J.D."/>
            <person name="Fartmann B."/>
            <person name="Nyakatura G."/>
            <person name="Kempken F."/>
            <person name="Maier J."/>
            <person name="Schulte U."/>
        </authorList>
    </citation>
    <scope>NUCLEOTIDE SEQUENCE [LARGE SCALE GENOMIC DNA]</scope>
    <source>
        <strain>ATCC 24698 / 74-OR23-1A / CBS 708.71 / DSM 1257 / FGSC 987</strain>
    </source>
</reference>
<reference key="2">
    <citation type="journal article" date="2003" name="Nature">
        <title>The genome sequence of the filamentous fungus Neurospora crassa.</title>
        <authorList>
            <person name="Galagan J.E."/>
            <person name="Calvo S.E."/>
            <person name="Borkovich K.A."/>
            <person name="Selker E.U."/>
            <person name="Read N.D."/>
            <person name="Jaffe D.B."/>
            <person name="FitzHugh W."/>
            <person name="Ma L.-J."/>
            <person name="Smirnov S."/>
            <person name="Purcell S."/>
            <person name="Rehman B."/>
            <person name="Elkins T."/>
            <person name="Engels R."/>
            <person name="Wang S."/>
            <person name="Nielsen C.B."/>
            <person name="Butler J."/>
            <person name="Endrizzi M."/>
            <person name="Qui D."/>
            <person name="Ianakiev P."/>
            <person name="Bell-Pedersen D."/>
            <person name="Nelson M.A."/>
            <person name="Werner-Washburne M."/>
            <person name="Selitrennikoff C.P."/>
            <person name="Kinsey J.A."/>
            <person name="Braun E.L."/>
            <person name="Zelter A."/>
            <person name="Schulte U."/>
            <person name="Kothe G.O."/>
            <person name="Jedd G."/>
            <person name="Mewes H.-W."/>
            <person name="Staben C."/>
            <person name="Marcotte E."/>
            <person name="Greenberg D."/>
            <person name="Roy A."/>
            <person name="Foley K."/>
            <person name="Naylor J."/>
            <person name="Stange-Thomann N."/>
            <person name="Barrett R."/>
            <person name="Gnerre S."/>
            <person name="Kamal M."/>
            <person name="Kamvysselis M."/>
            <person name="Mauceli E.W."/>
            <person name="Bielke C."/>
            <person name="Rudd S."/>
            <person name="Frishman D."/>
            <person name="Krystofova S."/>
            <person name="Rasmussen C."/>
            <person name="Metzenberg R.L."/>
            <person name="Perkins D.D."/>
            <person name="Kroken S."/>
            <person name="Cogoni C."/>
            <person name="Macino G."/>
            <person name="Catcheside D.E.A."/>
            <person name="Li W."/>
            <person name="Pratt R.J."/>
            <person name="Osmani S.A."/>
            <person name="DeSouza C.P.C."/>
            <person name="Glass N.L."/>
            <person name="Orbach M.J."/>
            <person name="Berglund J.A."/>
            <person name="Voelker R."/>
            <person name="Yarden O."/>
            <person name="Plamann M."/>
            <person name="Seiler S."/>
            <person name="Dunlap J.C."/>
            <person name="Radford A."/>
            <person name="Aramayo R."/>
            <person name="Natvig D.O."/>
            <person name="Alex L.A."/>
            <person name="Mannhaupt G."/>
            <person name="Ebbole D.J."/>
            <person name="Freitag M."/>
            <person name="Paulsen I."/>
            <person name="Sachs M.S."/>
            <person name="Lander E.S."/>
            <person name="Nusbaum C."/>
            <person name="Birren B.W."/>
        </authorList>
    </citation>
    <scope>NUCLEOTIDE SEQUENCE [LARGE SCALE GENOMIC DNA]</scope>
    <source>
        <strain>ATCC 24698 / 74-OR23-1A / CBS 708.71 / DSM 1257 / FGSC 987</strain>
    </source>
</reference>
<comment type="function">
    <text evidence="1">Component of the exocyst complex involved in the docking of exocytic vesicles with fusion sites on the plasma membrane.</text>
</comment>
<comment type="subunit">
    <text evidence="1">The exocyst complex is composed of sec3, sec5, sec6, sec8, sec10, sec15, exo70 and exo84.</text>
</comment>
<comment type="similarity">
    <text evidence="3">Belongs to the SEC8 family.</text>
</comment>
<dbReference type="EMBL" id="AL451015">
    <property type="protein sequence ID" value="CAC18205.1"/>
    <property type="molecule type" value="Genomic_DNA"/>
</dbReference>
<dbReference type="EMBL" id="CM002240">
    <property type="protein sequence ID" value="EAA31914.3"/>
    <property type="molecule type" value="Genomic_DNA"/>
</dbReference>
<dbReference type="RefSeq" id="XP_961150.3">
    <property type="nucleotide sequence ID" value="XM_956057.3"/>
</dbReference>
<dbReference type="SMR" id="Q9HE88"/>
<dbReference type="FunCoup" id="Q9HE88">
    <property type="interactions" value="283"/>
</dbReference>
<dbReference type="STRING" id="367110.Q9HE88"/>
<dbReference type="PaxDb" id="5141-EFNCRP00000003757"/>
<dbReference type="EnsemblFungi" id="EAA31914">
    <property type="protein sequence ID" value="EAA31914"/>
    <property type="gene ID" value="NCU04190"/>
</dbReference>
<dbReference type="GeneID" id="3877316"/>
<dbReference type="KEGG" id="ncr:NCU04190"/>
<dbReference type="VEuPathDB" id="FungiDB:NCU04190"/>
<dbReference type="HOGENOM" id="CLU_004025_0_0_1"/>
<dbReference type="InParanoid" id="Q9HE88"/>
<dbReference type="OrthoDB" id="272977at2759"/>
<dbReference type="Proteomes" id="UP000001805">
    <property type="component" value="Chromosome 2, Linkage Group V"/>
</dbReference>
<dbReference type="GO" id="GO:0000145">
    <property type="term" value="C:exocyst"/>
    <property type="evidence" value="ECO:0000318"/>
    <property type="project" value="GO_Central"/>
</dbReference>
<dbReference type="GO" id="GO:0006887">
    <property type="term" value="P:exocytosis"/>
    <property type="evidence" value="ECO:0000318"/>
    <property type="project" value="GO_Central"/>
</dbReference>
<dbReference type="GO" id="GO:0006893">
    <property type="term" value="P:Golgi to plasma membrane transport"/>
    <property type="evidence" value="ECO:0000318"/>
    <property type="project" value="GO_Central"/>
</dbReference>
<dbReference type="GO" id="GO:0015031">
    <property type="term" value="P:protein transport"/>
    <property type="evidence" value="ECO:0007669"/>
    <property type="project" value="UniProtKB-KW"/>
</dbReference>
<dbReference type="GO" id="GO:0006904">
    <property type="term" value="P:vesicle docking involved in exocytosis"/>
    <property type="evidence" value="ECO:0007669"/>
    <property type="project" value="InterPro"/>
</dbReference>
<dbReference type="GO" id="GO:0090522">
    <property type="term" value="P:vesicle tethering involved in exocytosis"/>
    <property type="evidence" value="ECO:0007669"/>
    <property type="project" value="InterPro"/>
</dbReference>
<dbReference type="InterPro" id="IPR039682">
    <property type="entry name" value="Sec8/EXOC4"/>
</dbReference>
<dbReference type="InterPro" id="IPR007191">
    <property type="entry name" value="Sec8_exocyst_N"/>
</dbReference>
<dbReference type="InterPro" id="IPR048630">
    <property type="entry name" value="Sec8_M"/>
</dbReference>
<dbReference type="PANTHER" id="PTHR14146">
    <property type="entry name" value="EXOCYST COMPLEX COMPONENT 4"/>
    <property type="match status" value="1"/>
</dbReference>
<dbReference type="PANTHER" id="PTHR14146:SF0">
    <property type="entry name" value="EXOCYST COMPLEX COMPONENT 4"/>
    <property type="match status" value="1"/>
</dbReference>
<dbReference type="Pfam" id="PF20652">
    <property type="entry name" value="Sec8_C"/>
    <property type="match status" value="1"/>
</dbReference>
<dbReference type="Pfam" id="PF04048">
    <property type="entry name" value="Sec8_N"/>
    <property type="match status" value="1"/>
</dbReference>
<name>SEC8_NEUCR</name>
<accession>Q9HE88</accession>
<accession>Q7S7Q7</accession>
<organism>
    <name type="scientific">Neurospora crassa (strain ATCC 24698 / 74-OR23-1A / CBS 708.71 / DSM 1257 / FGSC 987)</name>
    <dbReference type="NCBI Taxonomy" id="367110"/>
    <lineage>
        <taxon>Eukaryota</taxon>
        <taxon>Fungi</taxon>
        <taxon>Dikarya</taxon>
        <taxon>Ascomycota</taxon>
        <taxon>Pezizomycotina</taxon>
        <taxon>Sordariomycetes</taxon>
        <taxon>Sordariomycetidae</taxon>
        <taxon>Sordariales</taxon>
        <taxon>Sordariaceae</taxon>
        <taxon>Neurospora</taxon>
    </lineage>
</organism>
<evidence type="ECO:0000250" key="1"/>
<evidence type="ECO:0000256" key="2">
    <source>
        <dbReference type="SAM" id="MobiDB-lite"/>
    </source>
</evidence>
<evidence type="ECO:0000305" key="3"/>
<keyword id="KW-0268">Exocytosis</keyword>
<keyword id="KW-0653">Protein transport</keyword>
<keyword id="KW-1185">Reference proteome</keyword>
<keyword id="KW-0813">Transport</keyword>
<sequence>MADRYGQQPQSYRGNSGFGNLGRRNDDYDPYGDGYPSDRYGTSTNPASRPSTASRNAPPPRSAQRGRTGAGDMQIQSNAERQIGNVLDLIKREWPAMVETDCIPVQLALQLLDTSSVGRAHEYRNFQQTHQFLQESLKNIVHDHHQGFNSSIGTFHKIQGSIQSSQKKVRALKESLAASKTALCTTNPELKQLHATSRMYDGVLQTLNELDDLRTVPDQLEARISEKRFLTAVEVLQNALRKLRKPELDNIGALSDLRSYLANQETALMDILVEELHEHLYLKSPYCQERWQNLAKVQGISHETYGDAPGVAPFHGILDTIDWEKSVAEDPQKNPEADTFYYVTLLVEALNRLGRLETAVDMLKQRLPVELFAVVNETINDVDQKHPSSLRGGASGSHGLNIYGHRETRMRADVIHDLLSTLYGKFEAIAEGHRVLHEAIKALIRREGAGNNSVLLGGFKELWNLYQNEIRALLHNYVTTDADVYQFSRTPRPGMGMNGRADSARDNLFKFSEVDAKSAEMASEYEALDSIIRAAVPGLTDSTRRDNKKGSLIIPRSEPITSRKSAGYGSGSSQQNSGTYKSLVEPSVFNMSLLLPPTLIFLQRLKSIVPPGSDLATSTLTSFLDNFLVNVFQPQLDETLGKLSDTVFGEADAFQQDSDWAQVAKRPVYKGTTAFFTVITAFCRMLGTIPHDQALSTLIITQMVRYYDRCFSWYKALVTKTQEGGDKQIREKEKLRASAILATEPSEVRETIQRLWKSENLNDLELLYREVNQLIAWANGRDLDASDIIQDRDMIQSMCLLYTSMKWLSVKIHGLRHITRNETDSSKSSFPTKAEKKRWTLLNDPSKATGGEAPVYLPMTEETVENFDSILVSYDELASTALLTLHLEIRTRILHSLQTALSPLTTAPYLLDQEVNEPDPEILSLNSEMVAYDEILVRCLRLREVQFVRNGLGKLINGFLIKNAPMTAPMNAKGCGRMQLNILVLQQNLKNIEEGVDLVRASNYFEMFERGVDAILEKAREGVASSGSQETGDAGRKSEDAGEEGAETPNSRKSAEIFGDDKDRFSYDELKALVELCYSEQLADPERGVAAAAKRQMADKLLNLSEYMWQS</sequence>
<proteinExistence type="inferred from homology"/>
<gene>
    <name type="primary">sec8</name>
    <name type="ORF">B13O20.150</name>
    <name type="ORF">NCU04190</name>
</gene>